<accession>Q88R81</accession>
<reference key="1">
    <citation type="journal article" date="2002" name="Environ. Microbiol.">
        <title>Complete genome sequence and comparative analysis of the metabolically versatile Pseudomonas putida KT2440.</title>
        <authorList>
            <person name="Nelson K.E."/>
            <person name="Weinel C."/>
            <person name="Paulsen I.T."/>
            <person name="Dodson R.J."/>
            <person name="Hilbert H."/>
            <person name="Martins dos Santos V.A.P."/>
            <person name="Fouts D.E."/>
            <person name="Gill S.R."/>
            <person name="Pop M."/>
            <person name="Holmes M."/>
            <person name="Brinkac L.M."/>
            <person name="Beanan M.J."/>
            <person name="DeBoy R.T."/>
            <person name="Daugherty S.C."/>
            <person name="Kolonay J.F."/>
            <person name="Madupu R."/>
            <person name="Nelson W.C."/>
            <person name="White O."/>
            <person name="Peterson J.D."/>
            <person name="Khouri H.M."/>
            <person name="Hance I."/>
            <person name="Chris Lee P."/>
            <person name="Holtzapple E.K."/>
            <person name="Scanlan D."/>
            <person name="Tran K."/>
            <person name="Moazzez A."/>
            <person name="Utterback T.R."/>
            <person name="Rizzo M."/>
            <person name="Lee K."/>
            <person name="Kosack D."/>
            <person name="Moestl D."/>
            <person name="Wedler H."/>
            <person name="Lauber J."/>
            <person name="Stjepandic D."/>
            <person name="Hoheisel J."/>
            <person name="Straetz M."/>
            <person name="Heim S."/>
            <person name="Kiewitz C."/>
            <person name="Eisen J.A."/>
            <person name="Timmis K.N."/>
            <person name="Duesterhoeft A."/>
            <person name="Tuemmler B."/>
            <person name="Fraser C.M."/>
        </authorList>
    </citation>
    <scope>NUCLEOTIDE SEQUENCE [LARGE SCALE GENOMIC DNA]</scope>
    <source>
        <strain>ATCC 47054 / DSM 6125 / CFBP 8728 / NCIMB 11950 / KT2440</strain>
    </source>
</reference>
<evidence type="ECO:0000255" key="1">
    <source>
        <dbReference type="HAMAP-Rule" id="MF_00117"/>
    </source>
</evidence>
<feature type="chain" id="PRO_0000192194" description="33 kDa chaperonin">
    <location>
        <begin position="1"/>
        <end position="299"/>
    </location>
</feature>
<feature type="disulfide bond" description="Redox-active" evidence="1">
    <location>
        <begin position="234"/>
        <end position="236"/>
    </location>
</feature>
<feature type="disulfide bond" description="Redox-active" evidence="1">
    <location>
        <begin position="268"/>
        <end position="271"/>
    </location>
</feature>
<protein>
    <recommendedName>
        <fullName evidence="1">33 kDa chaperonin</fullName>
    </recommendedName>
    <alternativeName>
        <fullName evidence="1">Heat shock protein 33 homolog</fullName>
        <shortName evidence="1">HSP33</shortName>
    </alternativeName>
</protein>
<sequence>MSDLPDTDFTQRFIFDERDVRGEWVSLDDSYAAVLARHEYPQPVQVLLGELMAATALLVGAMKFDGLLILQARSAGPIPLLMVECSSEREIRGMARYEADQIPAGATLSQLMPDGHLTLTIDPVKGQRYQGTVDLDGANLSECFTNYFVQSQQLNTRFWLNAQGGKARGLLLQQLPRDRQPDDEEREDSWQHVVALAKTLKPEEWTEGNETLLHRLYHEDAVRLFDIQPLRFNCSCSRERSGNALVSLGEHDAKALVDECGGTVEIDCQFCNERYFFDASDVAQLFAGGGTDVASETRH</sequence>
<keyword id="KW-0143">Chaperone</keyword>
<keyword id="KW-0963">Cytoplasm</keyword>
<keyword id="KW-1015">Disulfide bond</keyword>
<keyword id="KW-0676">Redox-active center</keyword>
<keyword id="KW-1185">Reference proteome</keyword>
<keyword id="KW-0862">Zinc</keyword>
<comment type="function">
    <text evidence="1">Redox regulated molecular chaperone. Protects both thermally unfolding and oxidatively damaged proteins from irreversible aggregation. Plays an important role in the bacterial defense system toward oxidative stress.</text>
</comment>
<comment type="subcellular location">
    <subcellularLocation>
        <location evidence="1">Cytoplasm</location>
    </subcellularLocation>
</comment>
<comment type="PTM">
    <text evidence="1">Under oxidizing conditions two disulfide bonds are formed involving the reactive cysteines. Under reducing conditions zinc is bound to the reactive cysteines and the protein is inactive.</text>
</comment>
<comment type="similarity">
    <text evidence="1">Belongs to the HSP33 family.</text>
</comment>
<proteinExistence type="inferred from homology"/>
<name>HSLO_PSEPK</name>
<dbReference type="EMBL" id="AE015451">
    <property type="protein sequence ID" value="AAN65884.1"/>
    <property type="molecule type" value="Genomic_DNA"/>
</dbReference>
<dbReference type="RefSeq" id="NP_742420.1">
    <property type="nucleotide sequence ID" value="NC_002947.4"/>
</dbReference>
<dbReference type="RefSeq" id="WP_010951624.1">
    <property type="nucleotide sequence ID" value="NZ_CP169744.1"/>
</dbReference>
<dbReference type="SMR" id="Q88R81"/>
<dbReference type="STRING" id="160488.PP_0252"/>
<dbReference type="PaxDb" id="160488-PP_0252"/>
<dbReference type="GeneID" id="83677513"/>
<dbReference type="KEGG" id="ppu:PP_0252"/>
<dbReference type="PATRIC" id="fig|160488.4.peg.269"/>
<dbReference type="eggNOG" id="COG1281">
    <property type="taxonomic scope" value="Bacteria"/>
</dbReference>
<dbReference type="HOGENOM" id="CLU_054493_0_0_6"/>
<dbReference type="OrthoDB" id="9793753at2"/>
<dbReference type="PhylomeDB" id="Q88R81"/>
<dbReference type="BioCyc" id="PPUT160488:G1G01-274-MONOMER"/>
<dbReference type="Proteomes" id="UP000000556">
    <property type="component" value="Chromosome"/>
</dbReference>
<dbReference type="GO" id="GO:0005737">
    <property type="term" value="C:cytoplasm"/>
    <property type="evidence" value="ECO:0007669"/>
    <property type="project" value="UniProtKB-SubCell"/>
</dbReference>
<dbReference type="GO" id="GO:0044183">
    <property type="term" value="F:protein folding chaperone"/>
    <property type="evidence" value="ECO:0007669"/>
    <property type="project" value="TreeGrafter"/>
</dbReference>
<dbReference type="GO" id="GO:0051082">
    <property type="term" value="F:unfolded protein binding"/>
    <property type="evidence" value="ECO:0007669"/>
    <property type="project" value="UniProtKB-UniRule"/>
</dbReference>
<dbReference type="GO" id="GO:0042026">
    <property type="term" value="P:protein refolding"/>
    <property type="evidence" value="ECO:0007669"/>
    <property type="project" value="TreeGrafter"/>
</dbReference>
<dbReference type="CDD" id="cd00498">
    <property type="entry name" value="Hsp33"/>
    <property type="match status" value="1"/>
</dbReference>
<dbReference type="Gene3D" id="1.10.287.480">
    <property type="entry name" value="helix hairpin bin"/>
    <property type="match status" value="1"/>
</dbReference>
<dbReference type="Gene3D" id="3.55.30.10">
    <property type="entry name" value="Hsp33 domain"/>
    <property type="match status" value="1"/>
</dbReference>
<dbReference type="Gene3D" id="3.90.1280.10">
    <property type="entry name" value="HSP33 redox switch-like"/>
    <property type="match status" value="1"/>
</dbReference>
<dbReference type="HAMAP" id="MF_00117">
    <property type="entry name" value="HslO"/>
    <property type="match status" value="1"/>
</dbReference>
<dbReference type="InterPro" id="IPR000397">
    <property type="entry name" value="Heat_shock_Hsp33"/>
</dbReference>
<dbReference type="InterPro" id="IPR016154">
    <property type="entry name" value="Heat_shock_Hsp33_C"/>
</dbReference>
<dbReference type="InterPro" id="IPR016153">
    <property type="entry name" value="Heat_shock_Hsp33_N"/>
</dbReference>
<dbReference type="InterPro" id="IPR023212">
    <property type="entry name" value="Hsp33_helix_hairpin_bin_dom_sf"/>
</dbReference>
<dbReference type="NCBIfam" id="NF001033">
    <property type="entry name" value="PRK00114.1"/>
    <property type="match status" value="1"/>
</dbReference>
<dbReference type="PANTHER" id="PTHR30111">
    <property type="entry name" value="33 KDA CHAPERONIN"/>
    <property type="match status" value="1"/>
</dbReference>
<dbReference type="PANTHER" id="PTHR30111:SF1">
    <property type="entry name" value="33 KDA CHAPERONIN"/>
    <property type="match status" value="1"/>
</dbReference>
<dbReference type="Pfam" id="PF01430">
    <property type="entry name" value="HSP33"/>
    <property type="match status" value="1"/>
</dbReference>
<dbReference type="PIRSF" id="PIRSF005261">
    <property type="entry name" value="Heat_shock_Hsp33"/>
    <property type="match status" value="1"/>
</dbReference>
<dbReference type="SUPFAM" id="SSF64397">
    <property type="entry name" value="Hsp33 domain"/>
    <property type="match status" value="1"/>
</dbReference>
<dbReference type="SUPFAM" id="SSF118352">
    <property type="entry name" value="HSP33 redox switch-like"/>
    <property type="match status" value="1"/>
</dbReference>
<organism>
    <name type="scientific">Pseudomonas putida (strain ATCC 47054 / DSM 6125 / CFBP 8728 / NCIMB 11950 / KT2440)</name>
    <dbReference type="NCBI Taxonomy" id="160488"/>
    <lineage>
        <taxon>Bacteria</taxon>
        <taxon>Pseudomonadati</taxon>
        <taxon>Pseudomonadota</taxon>
        <taxon>Gammaproteobacteria</taxon>
        <taxon>Pseudomonadales</taxon>
        <taxon>Pseudomonadaceae</taxon>
        <taxon>Pseudomonas</taxon>
    </lineage>
</organism>
<gene>
    <name evidence="1" type="primary">hslO</name>
    <name type="ordered locus">PP_0252</name>
</gene>